<proteinExistence type="inferred from homology"/>
<comment type="function">
    <text evidence="1">The RecF protein is involved in DNA metabolism; it is required for DNA replication and normal SOS inducibility. RecF binds preferentially to single-stranded, linear DNA. It also seems to bind ATP.</text>
</comment>
<comment type="subcellular location">
    <subcellularLocation>
        <location evidence="1">Cytoplasm</location>
    </subcellularLocation>
</comment>
<comment type="similarity">
    <text evidence="1">Belongs to the RecF family.</text>
</comment>
<keyword id="KW-0067">ATP-binding</keyword>
<keyword id="KW-0963">Cytoplasm</keyword>
<keyword id="KW-0227">DNA damage</keyword>
<keyword id="KW-0234">DNA repair</keyword>
<keyword id="KW-0235">DNA replication</keyword>
<keyword id="KW-0238">DNA-binding</keyword>
<keyword id="KW-0547">Nucleotide-binding</keyword>
<keyword id="KW-0742">SOS response</keyword>
<gene>
    <name evidence="1" type="primary">recF</name>
    <name type="ordered locus">SZO_19270</name>
</gene>
<name>RECF_STRS7</name>
<reference key="1">
    <citation type="journal article" date="2009" name="PLoS Pathog.">
        <title>Genomic evidence for the evolution of Streptococcus equi: host restriction, increased virulence, and genetic exchange with human pathogens.</title>
        <authorList>
            <person name="Holden M.T.G."/>
            <person name="Heather Z."/>
            <person name="Paillot R."/>
            <person name="Steward K.F."/>
            <person name="Webb K."/>
            <person name="Ainslie F."/>
            <person name="Jourdan T."/>
            <person name="Bason N.C."/>
            <person name="Holroyd N.E."/>
            <person name="Mungall K."/>
            <person name="Quail M.A."/>
            <person name="Sanders M."/>
            <person name="Simmonds M."/>
            <person name="Willey D."/>
            <person name="Brooks K."/>
            <person name="Aanensen D.M."/>
            <person name="Spratt B.G."/>
            <person name="Jolley K.A."/>
            <person name="Maiden M.C.J."/>
            <person name="Kehoe M."/>
            <person name="Chanter N."/>
            <person name="Bentley S.D."/>
            <person name="Robinson C."/>
            <person name="Maskell D.J."/>
            <person name="Parkhill J."/>
            <person name="Waller A.S."/>
        </authorList>
    </citation>
    <scope>NUCLEOTIDE SEQUENCE [LARGE SCALE GENOMIC DNA]</scope>
    <source>
        <strain>H70</strain>
    </source>
</reference>
<accession>C0MGR5</accession>
<evidence type="ECO:0000255" key="1">
    <source>
        <dbReference type="HAMAP-Rule" id="MF_00365"/>
    </source>
</evidence>
<sequence>MWIKELNLTHYRNYQQASAAFSPGLNVFIGDNAQGKTNFLEAIYFLSVTRSHRTKSDKDLIYFDERDCSISGTLERLSGRVQLEILLSDKGRITKINTLKQAKLSDYIGAMMVVLFAPEDLQLVKGSPSLRRKFMDIDLGQIKPVYLSDLSHYNHVLKQRNAYLKSVHQLDSDFLSVLDEQLVTYGSRVMAHRLAFVQSLAKEASKHHQAISNGLEKLSISYQASVSFEHQQEIYQQFMDQLKATHQRDFLRKNTGVGPHRDDLVFYINDMNANFASQGQHRSLILSLKMAEVSLMKQLTGDNPILLLDDVMSELDNIRQTKLLEAVKKENVQTFITTTSLEHLSQLPKDISLFKVNKGTIALDSVMID</sequence>
<dbReference type="EMBL" id="FM204884">
    <property type="protein sequence ID" value="CAX00903.1"/>
    <property type="molecule type" value="Genomic_DNA"/>
</dbReference>
<dbReference type="SMR" id="C0MGR5"/>
<dbReference type="KEGG" id="seq:SZO_19270"/>
<dbReference type="PATRIC" id="fig|40041.11.peg.2067"/>
<dbReference type="eggNOG" id="COG1195">
    <property type="taxonomic scope" value="Bacteria"/>
</dbReference>
<dbReference type="HOGENOM" id="CLU_040267_0_1_9"/>
<dbReference type="Proteomes" id="UP000001368">
    <property type="component" value="Chromosome"/>
</dbReference>
<dbReference type="GO" id="GO:0005737">
    <property type="term" value="C:cytoplasm"/>
    <property type="evidence" value="ECO:0007669"/>
    <property type="project" value="UniProtKB-SubCell"/>
</dbReference>
<dbReference type="GO" id="GO:0005524">
    <property type="term" value="F:ATP binding"/>
    <property type="evidence" value="ECO:0007669"/>
    <property type="project" value="UniProtKB-UniRule"/>
</dbReference>
<dbReference type="GO" id="GO:0003697">
    <property type="term" value="F:single-stranded DNA binding"/>
    <property type="evidence" value="ECO:0007669"/>
    <property type="project" value="UniProtKB-UniRule"/>
</dbReference>
<dbReference type="GO" id="GO:0006260">
    <property type="term" value="P:DNA replication"/>
    <property type="evidence" value="ECO:0007669"/>
    <property type="project" value="UniProtKB-UniRule"/>
</dbReference>
<dbReference type="GO" id="GO:0000731">
    <property type="term" value="P:DNA synthesis involved in DNA repair"/>
    <property type="evidence" value="ECO:0007669"/>
    <property type="project" value="TreeGrafter"/>
</dbReference>
<dbReference type="GO" id="GO:0006302">
    <property type="term" value="P:double-strand break repair"/>
    <property type="evidence" value="ECO:0007669"/>
    <property type="project" value="TreeGrafter"/>
</dbReference>
<dbReference type="GO" id="GO:0009432">
    <property type="term" value="P:SOS response"/>
    <property type="evidence" value="ECO:0007669"/>
    <property type="project" value="UniProtKB-UniRule"/>
</dbReference>
<dbReference type="CDD" id="cd03242">
    <property type="entry name" value="ABC_RecF"/>
    <property type="match status" value="1"/>
</dbReference>
<dbReference type="Gene3D" id="3.40.50.300">
    <property type="entry name" value="P-loop containing nucleotide triphosphate hydrolases"/>
    <property type="match status" value="1"/>
</dbReference>
<dbReference type="Gene3D" id="1.20.1050.90">
    <property type="entry name" value="RecF/RecN/SMC, N-terminal domain"/>
    <property type="match status" value="1"/>
</dbReference>
<dbReference type="HAMAP" id="MF_00365">
    <property type="entry name" value="RecF"/>
    <property type="match status" value="1"/>
</dbReference>
<dbReference type="InterPro" id="IPR001238">
    <property type="entry name" value="DNA-binding_RecF"/>
</dbReference>
<dbReference type="InterPro" id="IPR018078">
    <property type="entry name" value="DNA-binding_RecF_CS"/>
</dbReference>
<dbReference type="InterPro" id="IPR027417">
    <property type="entry name" value="P-loop_NTPase"/>
</dbReference>
<dbReference type="InterPro" id="IPR003395">
    <property type="entry name" value="RecF/RecN/SMC_N"/>
</dbReference>
<dbReference type="InterPro" id="IPR042174">
    <property type="entry name" value="RecF_2"/>
</dbReference>
<dbReference type="NCBIfam" id="TIGR00611">
    <property type="entry name" value="recf"/>
    <property type="match status" value="1"/>
</dbReference>
<dbReference type="PANTHER" id="PTHR32182">
    <property type="entry name" value="DNA REPLICATION AND REPAIR PROTEIN RECF"/>
    <property type="match status" value="1"/>
</dbReference>
<dbReference type="PANTHER" id="PTHR32182:SF0">
    <property type="entry name" value="DNA REPLICATION AND REPAIR PROTEIN RECF"/>
    <property type="match status" value="1"/>
</dbReference>
<dbReference type="Pfam" id="PF02463">
    <property type="entry name" value="SMC_N"/>
    <property type="match status" value="1"/>
</dbReference>
<dbReference type="SUPFAM" id="SSF52540">
    <property type="entry name" value="P-loop containing nucleoside triphosphate hydrolases"/>
    <property type="match status" value="1"/>
</dbReference>
<dbReference type="PROSITE" id="PS00617">
    <property type="entry name" value="RECF_1"/>
    <property type="match status" value="1"/>
</dbReference>
<dbReference type="PROSITE" id="PS00618">
    <property type="entry name" value="RECF_2"/>
    <property type="match status" value="1"/>
</dbReference>
<protein>
    <recommendedName>
        <fullName evidence="1">DNA replication and repair protein RecF</fullName>
    </recommendedName>
</protein>
<organism>
    <name type="scientific">Streptococcus equi subsp. zooepidemicus (strain H70)</name>
    <dbReference type="NCBI Taxonomy" id="553483"/>
    <lineage>
        <taxon>Bacteria</taxon>
        <taxon>Bacillati</taxon>
        <taxon>Bacillota</taxon>
        <taxon>Bacilli</taxon>
        <taxon>Lactobacillales</taxon>
        <taxon>Streptococcaceae</taxon>
        <taxon>Streptococcus</taxon>
    </lineage>
</organism>
<feature type="chain" id="PRO_1000205506" description="DNA replication and repair protein RecF">
    <location>
        <begin position="1"/>
        <end position="369"/>
    </location>
</feature>
<feature type="binding site" evidence="1">
    <location>
        <begin position="30"/>
        <end position="37"/>
    </location>
    <ligand>
        <name>ATP</name>
        <dbReference type="ChEBI" id="CHEBI:30616"/>
    </ligand>
</feature>